<name>CHI52_PAEXY</name>
<sequence>MNQAVRFRPVITFALAFLLLITWFAPRADAAAQWQAGTAYKKGDLVTYQNKDYECIQAHTALTGWEPSVVPALWKYVGEGSGGETPTPDTAPPSVPAGLTSSSITDTSVSLSWNASTDNVGVAGYEVYRNGVLVTSTSTTTAVVTGLTASTTYAFTVKAKDAAGNISAASTSLSVTTSNGSSNPGPTGTKWLIGYWHNFDNGSTNIRLRNVSTAYDVINVSFAEPISHGSGTLAFTPYNATVAEFKSDIAYLQSQGKKVLLSMGGANGTIELTDATKRQQFEDSLKSIISTYGFNGLDIDLEGSSLSLNAGDTDFRSPTTPKIVNLIQGVKAVKSHFGANFILTAAPETAYVQGGYLSYGGPWGAYLPVIHALRNELTLLHVQHYNTGSMVGLDGRSYAQGTADFHVAMAEMLLQGFHVGGSTGPFFSPLRPDQIAIGVPASQQAAGGGYTTPADLQKALNYLIKGVSYGGSYTLRQSTGYAGIKGIMTWSINWDAYTNNQFSSAHRPFLNGLSTQTTKEVVY</sequence>
<dbReference type="EC" id="3.2.1.14" evidence="5"/>
<dbReference type="EMBL" id="MW590333">
    <property type="protein sequence ID" value="QYZ85376.1"/>
    <property type="molecule type" value="Genomic_DNA"/>
</dbReference>
<dbReference type="SMR" id="A0A8G1A3Q5"/>
<dbReference type="GO" id="GO:0005576">
    <property type="term" value="C:extracellular region"/>
    <property type="evidence" value="ECO:0007669"/>
    <property type="project" value="InterPro"/>
</dbReference>
<dbReference type="GO" id="GO:0030246">
    <property type="term" value="F:carbohydrate binding"/>
    <property type="evidence" value="ECO:0007669"/>
    <property type="project" value="InterPro"/>
</dbReference>
<dbReference type="GO" id="GO:0008061">
    <property type="term" value="F:chitin binding"/>
    <property type="evidence" value="ECO:0007669"/>
    <property type="project" value="InterPro"/>
</dbReference>
<dbReference type="GO" id="GO:0004553">
    <property type="term" value="F:hydrolase activity, hydrolyzing O-glycosyl compounds"/>
    <property type="evidence" value="ECO:0007669"/>
    <property type="project" value="InterPro"/>
</dbReference>
<dbReference type="GO" id="GO:0006032">
    <property type="term" value="P:chitin catabolic process"/>
    <property type="evidence" value="ECO:0007669"/>
    <property type="project" value="UniProtKB-KW"/>
</dbReference>
<dbReference type="GO" id="GO:0000272">
    <property type="term" value="P:polysaccharide catabolic process"/>
    <property type="evidence" value="ECO:0007669"/>
    <property type="project" value="UniProtKB-KW"/>
</dbReference>
<dbReference type="CDD" id="cd12214">
    <property type="entry name" value="ChiA1_BD"/>
    <property type="match status" value="1"/>
</dbReference>
<dbReference type="CDD" id="cd00063">
    <property type="entry name" value="FN3"/>
    <property type="match status" value="1"/>
</dbReference>
<dbReference type="CDD" id="cd02871">
    <property type="entry name" value="GH18_chitinase_D-like"/>
    <property type="match status" value="1"/>
</dbReference>
<dbReference type="FunFam" id="2.60.40.10:FF:001114">
    <property type="entry name" value="Chitinase A1"/>
    <property type="match status" value="1"/>
</dbReference>
<dbReference type="Gene3D" id="2.10.10.20">
    <property type="entry name" value="Carbohydrate-binding module superfamily 5/12"/>
    <property type="match status" value="1"/>
</dbReference>
<dbReference type="Gene3D" id="3.20.20.80">
    <property type="entry name" value="Glycosidases"/>
    <property type="match status" value="1"/>
</dbReference>
<dbReference type="Gene3D" id="2.60.40.10">
    <property type="entry name" value="Immunoglobulins"/>
    <property type="match status" value="1"/>
</dbReference>
<dbReference type="InterPro" id="IPR003610">
    <property type="entry name" value="CBM5/12"/>
</dbReference>
<dbReference type="InterPro" id="IPR036573">
    <property type="entry name" value="CBM_sf_5/12"/>
</dbReference>
<dbReference type="InterPro" id="IPR011583">
    <property type="entry name" value="Chitinase_II/V-like_cat"/>
</dbReference>
<dbReference type="InterPro" id="IPR003961">
    <property type="entry name" value="FN3_dom"/>
</dbReference>
<dbReference type="InterPro" id="IPR036116">
    <property type="entry name" value="FN3_sf"/>
</dbReference>
<dbReference type="InterPro" id="IPR001223">
    <property type="entry name" value="Glyco_hydro18_cat"/>
</dbReference>
<dbReference type="InterPro" id="IPR001579">
    <property type="entry name" value="Glyco_hydro_18_chit_AS"/>
</dbReference>
<dbReference type="InterPro" id="IPR017853">
    <property type="entry name" value="Glycoside_hydrolase_SF"/>
</dbReference>
<dbReference type="InterPro" id="IPR050542">
    <property type="entry name" value="Glycosyl_Hydrlase18_Chitinase"/>
</dbReference>
<dbReference type="InterPro" id="IPR013783">
    <property type="entry name" value="Ig-like_fold"/>
</dbReference>
<dbReference type="PANTHER" id="PTHR45708">
    <property type="entry name" value="ENDOCHITINASE"/>
    <property type="match status" value="1"/>
</dbReference>
<dbReference type="PANTHER" id="PTHR45708:SF49">
    <property type="entry name" value="ENDOCHITINASE"/>
    <property type="match status" value="1"/>
</dbReference>
<dbReference type="Pfam" id="PF02839">
    <property type="entry name" value="CBM_5_12"/>
    <property type="match status" value="1"/>
</dbReference>
<dbReference type="Pfam" id="PF00041">
    <property type="entry name" value="fn3"/>
    <property type="match status" value="1"/>
</dbReference>
<dbReference type="Pfam" id="PF00704">
    <property type="entry name" value="Glyco_hydro_18"/>
    <property type="match status" value="1"/>
</dbReference>
<dbReference type="SMART" id="SM00495">
    <property type="entry name" value="ChtBD3"/>
    <property type="match status" value="1"/>
</dbReference>
<dbReference type="SMART" id="SM00060">
    <property type="entry name" value="FN3"/>
    <property type="match status" value="1"/>
</dbReference>
<dbReference type="SMART" id="SM00636">
    <property type="entry name" value="Glyco_18"/>
    <property type="match status" value="1"/>
</dbReference>
<dbReference type="SUPFAM" id="SSF51445">
    <property type="entry name" value="(Trans)glycosidases"/>
    <property type="match status" value="1"/>
</dbReference>
<dbReference type="SUPFAM" id="SSF51055">
    <property type="entry name" value="Carbohydrate binding domain"/>
    <property type="match status" value="1"/>
</dbReference>
<dbReference type="SUPFAM" id="SSF49265">
    <property type="entry name" value="Fibronectin type III"/>
    <property type="match status" value="1"/>
</dbReference>
<dbReference type="PROSITE" id="PS50853">
    <property type="entry name" value="FN3"/>
    <property type="match status" value="1"/>
</dbReference>
<dbReference type="PROSITE" id="PS01095">
    <property type="entry name" value="GH18_1"/>
    <property type="match status" value="1"/>
</dbReference>
<dbReference type="PROSITE" id="PS51910">
    <property type="entry name" value="GH18_2"/>
    <property type="match status" value="1"/>
</dbReference>
<comment type="function">
    <text evidence="5">Acidic chitinase that displays a broad substrate specificity, showing the highest specific activity toward colloidal chitin, followed by ethylene glycol chitin and ball milled chitin, but exhibits no activity toward powdery chitin and chitosan (PubMed:34022308). Hydrolyzes colloidal chitin and chitooligosaccharides with degree of polymerization 2-5 to release mainly N-acetyl chitobiose (PubMed:34022308). Displays inhibition effects on the growth of some phytopathogenic fungi, including Alternaria alstroemeriae, Botrytis cinerea, Rhizoctonia solani, Sclerotinia sclerotiorum and Valsa mali (PubMed:34022308).</text>
</comment>
<comment type="catalytic activity">
    <reaction evidence="5">
        <text>Random endo-hydrolysis of N-acetyl-beta-D-glucosaminide (1-&gt;4)-beta-linkages in chitin and chitodextrins.</text>
        <dbReference type="EC" id="3.2.1.14"/>
    </reaction>
</comment>
<comment type="activity regulation">
    <text evidence="5">Activity is inhibited by Cu(2+) and Co(2+), and almost completely inhibited by SDS.</text>
</comment>
<comment type="biophysicochemical properties">
    <kinetics>
        <KM evidence="5">3.06 mg/ml for colloidal chitin</KM>
        <Vmax evidence="5">71.38 umol/min/mg enzyme with colloidal chitin as substrate</Vmax>
        <text evidence="5">kcat is 0.08 sec(-1) with colloidal chitin as substrate.</text>
    </kinetics>
    <phDependence>
        <text evidence="5">Optimum pH is 4.5 (PubMed:34022308). Has an extremely wide pH stability range (4.0-13.0) (PubMed:34022308).</text>
    </phDependence>
    <temperatureDependence>
        <text evidence="5">Optimum temperature is 65 degrees Celsius (PubMed:34022308). Stable up to 50 degrees Celsius (PubMed:34022308).</text>
    </temperatureDependence>
</comment>
<comment type="biotechnology">
    <text evidence="5">Has a potential application in agriculture field as a biocontrol agent.</text>
</comment>
<comment type="similarity">
    <text evidence="7">Belongs to the glycosyl hydrolase 18 family. Chitinase class II subfamily.</text>
</comment>
<organism>
    <name type="scientific">Paenibacillus xylanexedens</name>
    <dbReference type="NCBI Taxonomy" id="528191"/>
    <lineage>
        <taxon>Bacteria</taxon>
        <taxon>Bacillati</taxon>
        <taxon>Bacillota</taxon>
        <taxon>Bacilli</taxon>
        <taxon>Bacillales</taxon>
        <taxon>Paenibacillaceae</taxon>
        <taxon>Paenibacillus</taxon>
    </lineage>
</organism>
<feature type="signal peptide" evidence="1">
    <location>
        <begin position="1"/>
        <end position="30"/>
    </location>
</feature>
<feature type="chain" id="PRO_5034008255" description="Chitinase Chi52">
    <location>
        <begin position="31"/>
        <end position="523"/>
    </location>
</feature>
<feature type="domain" description="Fibronectin type-III" evidence="2">
    <location>
        <begin position="95"/>
        <end position="180"/>
    </location>
</feature>
<feature type="domain" description="GH18" evidence="3">
    <location>
        <begin position="190"/>
        <end position="513"/>
    </location>
</feature>
<feature type="region of interest" description="Disordered" evidence="4">
    <location>
        <begin position="80"/>
        <end position="101"/>
    </location>
</feature>
<feature type="active site" description="Proton donor" evidence="3">
    <location>
        <position position="302"/>
    </location>
</feature>
<gene>
    <name evidence="8" type="primary">Chi52</name>
</gene>
<reference key="1">
    <citation type="journal article" date="2021" name="Int. J. Biol. Macromol.">
        <title>Biochemical characterization of a novel acidic chitinase with antifungal activity from Paenibacillus xylanexedens Z2-4.</title>
        <authorList>
            <person name="Zhang W."/>
            <person name="Ma J."/>
            <person name="Yan Q."/>
            <person name="Jiang Z."/>
            <person name="Yang S."/>
        </authorList>
    </citation>
    <scope>NUCLEOTIDE SEQUENCE [GENOMIC DNA]</scope>
    <scope>FUNCTION</scope>
    <scope>CATALYTIC ACTIVITY</scope>
    <scope>ACTIVITY REGULATION</scope>
    <scope>BIOPHYSICOCHEMICAL PROPERTIES</scope>
    <scope>BIOTECHNOLOGY</scope>
    <source>
        <strain>Z2-4</strain>
    </source>
</reference>
<evidence type="ECO:0000255" key="1"/>
<evidence type="ECO:0000255" key="2">
    <source>
        <dbReference type="PROSITE-ProRule" id="PRU00316"/>
    </source>
</evidence>
<evidence type="ECO:0000255" key="3">
    <source>
        <dbReference type="PROSITE-ProRule" id="PRU01258"/>
    </source>
</evidence>
<evidence type="ECO:0000256" key="4">
    <source>
        <dbReference type="SAM" id="MobiDB-lite"/>
    </source>
</evidence>
<evidence type="ECO:0000269" key="5">
    <source>
    </source>
</evidence>
<evidence type="ECO:0000303" key="6">
    <source>
    </source>
</evidence>
<evidence type="ECO:0000305" key="7"/>
<evidence type="ECO:0000312" key="8">
    <source>
        <dbReference type="EMBL" id="QYZ85376.1"/>
    </source>
</evidence>
<protein>
    <recommendedName>
        <fullName evidence="7">Chitinase Chi52</fullName>
        <ecNumber evidence="5">3.2.1.14</ecNumber>
    </recommendedName>
    <alternativeName>
        <fullName evidence="6">PxChi52</fullName>
    </alternativeName>
</protein>
<proteinExistence type="evidence at protein level"/>
<accession>A0A8G1A3Q5</accession>
<keyword id="KW-0119">Carbohydrate metabolism</keyword>
<keyword id="KW-0146">Chitin degradation</keyword>
<keyword id="KW-0326">Glycosidase</keyword>
<keyword id="KW-0378">Hydrolase</keyword>
<keyword id="KW-0624">Polysaccharide degradation</keyword>
<keyword id="KW-0732">Signal</keyword>